<organism>
    <name type="scientific">Mycoplasmopsis pulmonis (strain UAB CTIP)</name>
    <name type="common">Mycoplasma pulmonis</name>
    <dbReference type="NCBI Taxonomy" id="272635"/>
    <lineage>
        <taxon>Bacteria</taxon>
        <taxon>Bacillati</taxon>
        <taxon>Mycoplasmatota</taxon>
        <taxon>Mycoplasmoidales</taxon>
        <taxon>Metamycoplasmataceae</taxon>
        <taxon>Mycoplasmopsis</taxon>
    </lineage>
</organism>
<keyword id="KW-0963">Cytoplasm</keyword>
<keyword id="KW-0275">Fatty acid biosynthesis</keyword>
<keyword id="KW-0276">Fatty acid metabolism</keyword>
<keyword id="KW-0444">Lipid biosynthesis</keyword>
<keyword id="KW-0443">Lipid metabolism</keyword>
<keyword id="KW-0460">Magnesium</keyword>
<keyword id="KW-0479">Metal-binding</keyword>
<keyword id="KW-1185">Reference proteome</keyword>
<keyword id="KW-0808">Transferase</keyword>
<name>ACPS_MYCPU</name>
<protein>
    <recommendedName>
        <fullName evidence="1">Holo-[acyl-carrier-protein] synthase</fullName>
        <shortName evidence="1">Holo-ACP synthase</shortName>
        <ecNumber evidence="1">2.7.8.7</ecNumber>
    </recommendedName>
    <alternativeName>
        <fullName evidence="1">4'-phosphopantetheinyl transferase AcpS</fullName>
    </alternativeName>
</protein>
<evidence type="ECO:0000255" key="1">
    <source>
        <dbReference type="HAMAP-Rule" id="MF_00101"/>
    </source>
</evidence>
<comment type="function">
    <text evidence="1">Transfers the 4'-phosphopantetheine moiety from coenzyme A to a Ser of acyl-carrier-protein.</text>
</comment>
<comment type="catalytic activity">
    <reaction evidence="1">
        <text>apo-[ACP] + CoA = holo-[ACP] + adenosine 3',5'-bisphosphate + H(+)</text>
        <dbReference type="Rhea" id="RHEA:12068"/>
        <dbReference type="Rhea" id="RHEA-COMP:9685"/>
        <dbReference type="Rhea" id="RHEA-COMP:9690"/>
        <dbReference type="ChEBI" id="CHEBI:15378"/>
        <dbReference type="ChEBI" id="CHEBI:29999"/>
        <dbReference type="ChEBI" id="CHEBI:57287"/>
        <dbReference type="ChEBI" id="CHEBI:58343"/>
        <dbReference type="ChEBI" id="CHEBI:64479"/>
        <dbReference type="EC" id="2.7.8.7"/>
    </reaction>
</comment>
<comment type="cofactor">
    <cofactor evidence="1">
        <name>Mg(2+)</name>
        <dbReference type="ChEBI" id="CHEBI:18420"/>
    </cofactor>
</comment>
<comment type="subcellular location">
    <subcellularLocation>
        <location evidence="1">Cytoplasm</location>
    </subcellularLocation>
</comment>
<comment type="similarity">
    <text evidence="1">Belongs to the P-Pant transferase superfamily. AcpS family.</text>
</comment>
<feature type="chain" id="PRO_0000175674" description="Holo-[acyl-carrier-protein] synthase">
    <location>
        <begin position="1"/>
        <end position="108"/>
    </location>
</feature>
<feature type="binding site" evidence="1">
    <location>
        <position position="9"/>
    </location>
    <ligand>
        <name>Mg(2+)</name>
        <dbReference type="ChEBI" id="CHEBI:18420"/>
    </ligand>
</feature>
<feature type="binding site" evidence="1">
    <location>
        <position position="54"/>
    </location>
    <ligand>
        <name>Mg(2+)</name>
        <dbReference type="ChEBI" id="CHEBI:18420"/>
    </ligand>
</feature>
<sequence>MTLIMIGVDLVKIERLENKSDHFVRKILSLDEYELYQKTKAKAIFLATRWAIKEALFKADNQHFCFKKINITKKDNVYKFDGFAISVSSEKEYVIAFVQKIGVACHRD</sequence>
<gene>
    <name evidence="1" type="primary">acpS</name>
    <name type="ordered locus">MYPU_1130</name>
</gene>
<dbReference type="EC" id="2.7.8.7" evidence="1"/>
<dbReference type="EMBL" id="AL445563">
    <property type="protein sequence ID" value="CAC13286.1"/>
    <property type="molecule type" value="Genomic_DNA"/>
</dbReference>
<dbReference type="PIR" id="A90526">
    <property type="entry name" value="A90526"/>
</dbReference>
<dbReference type="SMR" id="Q98R97"/>
<dbReference type="STRING" id="272635.gene:17576694"/>
<dbReference type="KEGG" id="mpu:MYPU_1130"/>
<dbReference type="eggNOG" id="COG0736">
    <property type="taxonomic scope" value="Bacteria"/>
</dbReference>
<dbReference type="HOGENOM" id="CLU_089696_1_1_14"/>
<dbReference type="BioCyc" id="MPUL272635:G1GT6-112-MONOMER"/>
<dbReference type="Proteomes" id="UP000000528">
    <property type="component" value="Chromosome"/>
</dbReference>
<dbReference type="GO" id="GO:0005737">
    <property type="term" value="C:cytoplasm"/>
    <property type="evidence" value="ECO:0007669"/>
    <property type="project" value="UniProtKB-SubCell"/>
</dbReference>
<dbReference type="GO" id="GO:0008897">
    <property type="term" value="F:holo-[acyl-carrier-protein] synthase activity"/>
    <property type="evidence" value="ECO:0007669"/>
    <property type="project" value="UniProtKB-UniRule"/>
</dbReference>
<dbReference type="GO" id="GO:0000287">
    <property type="term" value="F:magnesium ion binding"/>
    <property type="evidence" value="ECO:0007669"/>
    <property type="project" value="UniProtKB-UniRule"/>
</dbReference>
<dbReference type="GO" id="GO:0006633">
    <property type="term" value="P:fatty acid biosynthetic process"/>
    <property type="evidence" value="ECO:0007669"/>
    <property type="project" value="UniProtKB-UniRule"/>
</dbReference>
<dbReference type="Gene3D" id="3.90.470.20">
    <property type="entry name" value="4'-phosphopantetheinyl transferase domain"/>
    <property type="match status" value="1"/>
</dbReference>
<dbReference type="HAMAP" id="MF_00101">
    <property type="entry name" value="AcpS"/>
    <property type="match status" value="1"/>
</dbReference>
<dbReference type="InterPro" id="IPR008278">
    <property type="entry name" value="4-PPantetheinyl_Trfase_dom"/>
</dbReference>
<dbReference type="InterPro" id="IPR037143">
    <property type="entry name" value="4-PPantetheinyl_Trfase_dom_sf"/>
</dbReference>
<dbReference type="InterPro" id="IPR002582">
    <property type="entry name" value="ACPS"/>
</dbReference>
<dbReference type="InterPro" id="IPR004568">
    <property type="entry name" value="Ppantetheine-prot_Trfase_dom"/>
</dbReference>
<dbReference type="NCBIfam" id="TIGR00556">
    <property type="entry name" value="pantethn_trn"/>
    <property type="match status" value="1"/>
</dbReference>
<dbReference type="Pfam" id="PF01648">
    <property type="entry name" value="ACPS"/>
    <property type="match status" value="1"/>
</dbReference>
<dbReference type="SUPFAM" id="SSF56214">
    <property type="entry name" value="4'-phosphopantetheinyl transferase"/>
    <property type="match status" value="1"/>
</dbReference>
<accession>Q98R97</accession>
<proteinExistence type="inferred from homology"/>
<reference key="1">
    <citation type="journal article" date="2001" name="Nucleic Acids Res.">
        <title>The complete genome sequence of the murine respiratory pathogen Mycoplasma pulmonis.</title>
        <authorList>
            <person name="Chambaud I."/>
            <person name="Heilig R."/>
            <person name="Ferris S."/>
            <person name="Barbe V."/>
            <person name="Samson D."/>
            <person name="Galisson F."/>
            <person name="Moszer I."/>
            <person name="Dybvig K."/>
            <person name="Wroblewski H."/>
            <person name="Viari A."/>
            <person name="Rocha E.P.C."/>
            <person name="Blanchard A."/>
        </authorList>
    </citation>
    <scope>NUCLEOTIDE SEQUENCE [LARGE SCALE GENOMIC DNA]</scope>
    <source>
        <strain>UAB CTIP</strain>
    </source>
</reference>